<accession>P48978</accession>
<feature type="signal peptide" evidence="1">
    <location>
        <begin position="1"/>
        <end position="26"/>
    </location>
</feature>
<feature type="chain" id="PRO_0000024809" description="Polygalacturonase">
    <location>
        <begin position="27"/>
        <end position="460"/>
    </location>
</feature>
<feature type="active site" description="Proton donor" evidence="2">
    <location>
        <position position="292"/>
    </location>
</feature>
<feature type="active site" evidence="2">
    <location>
        <position position="315"/>
    </location>
</feature>
<feature type="glycosylation site" description="N-linked (GlcNAc...) asparagine" evidence="1">
    <location>
        <position position="280"/>
    </location>
</feature>
<feature type="glycosylation site" description="N-linked (GlcNAc...) asparagine" evidence="1">
    <location>
        <position position="421"/>
    </location>
</feature>
<dbReference type="EC" id="3.2.1.15"/>
<dbReference type="EMBL" id="L27743">
    <property type="protein sequence ID" value="AAA74452.1"/>
    <property type="molecule type" value="mRNA"/>
</dbReference>
<dbReference type="PIR" id="T17011">
    <property type="entry name" value="T17011"/>
</dbReference>
<dbReference type="SMR" id="P48978"/>
<dbReference type="CAZy" id="GH28">
    <property type="family name" value="Glycoside Hydrolase Family 28"/>
</dbReference>
<dbReference type="BioCyc" id="MetaCyc:MONOMER-14863"/>
<dbReference type="GO" id="GO:0005576">
    <property type="term" value="C:extracellular region"/>
    <property type="evidence" value="ECO:0007669"/>
    <property type="project" value="UniProtKB-SubCell"/>
</dbReference>
<dbReference type="GO" id="GO:0004650">
    <property type="term" value="F:polygalacturonase activity"/>
    <property type="evidence" value="ECO:0007669"/>
    <property type="project" value="UniProtKB-EC"/>
</dbReference>
<dbReference type="GO" id="GO:0005975">
    <property type="term" value="P:carbohydrate metabolic process"/>
    <property type="evidence" value="ECO:0007669"/>
    <property type="project" value="InterPro"/>
</dbReference>
<dbReference type="GO" id="GO:0071555">
    <property type="term" value="P:cell wall organization"/>
    <property type="evidence" value="ECO:0007669"/>
    <property type="project" value="UniProtKB-KW"/>
</dbReference>
<dbReference type="GO" id="GO:0009835">
    <property type="term" value="P:fruit ripening"/>
    <property type="evidence" value="ECO:0007669"/>
    <property type="project" value="UniProtKB-KW"/>
</dbReference>
<dbReference type="FunFam" id="2.160.20.10:FF:000028">
    <property type="entry name" value="Polygalacturonase QRT2"/>
    <property type="match status" value="1"/>
</dbReference>
<dbReference type="Gene3D" id="2.160.20.10">
    <property type="entry name" value="Single-stranded right-handed beta-helix, Pectin lyase-like"/>
    <property type="match status" value="1"/>
</dbReference>
<dbReference type="InterPro" id="IPR000743">
    <property type="entry name" value="Glyco_hydro_28"/>
</dbReference>
<dbReference type="InterPro" id="IPR006626">
    <property type="entry name" value="PbH1"/>
</dbReference>
<dbReference type="InterPro" id="IPR012334">
    <property type="entry name" value="Pectin_lyas_fold"/>
</dbReference>
<dbReference type="InterPro" id="IPR011050">
    <property type="entry name" value="Pectin_lyase_fold/virulence"/>
</dbReference>
<dbReference type="PANTHER" id="PTHR31375">
    <property type="match status" value="1"/>
</dbReference>
<dbReference type="Pfam" id="PF00295">
    <property type="entry name" value="Glyco_hydro_28"/>
    <property type="match status" value="1"/>
</dbReference>
<dbReference type="SMART" id="SM00710">
    <property type="entry name" value="PbH1"/>
    <property type="match status" value="6"/>
</dbReference>
<dbReference type="SUPFAM" id="SSF51126">
    <property type="entry name" value="Pectin lyase-like"/>
    <property type="match status" value="1"/>
</dbReference>
<dbReference type="PROSITE" id="PS00502">
    <property type="entry name" value="POLYGALACTURONASE"/>
    <property type="match status" value="1"/>
</dbReference>
<organism>
    <name type="scientific">Malus domestica</name>
    <name type="common">Apple</name>
    <name type="synonym">Pyrus malus</name>
    <dbReference type="NCBI Taxonomy" id="3750"/>
    <lineage>
        <taxon>Eukaryota</taxon>
        <taxon>Viridiplantae</taxon>
        <taxon>Streptophyta</taxon>
        <taxon>Embryophyta</taxon>
        <taxon>Tracheophyta</taxon>
        <taxon>Spermatophyta</taxon>
        <taxon>Magnoliopsida</taxon>
        <taxon>eudicotyledons</taxon>
        <taxon>Gunneridae</taxon>
        <taxon>Pentapetalae</taxon>
        <taxon>rosids</taxon>
        <taxon>fabids</taxon>
        <taxon>Rosales</taxon>
        <taxon>Rosaceae</taxon>
        <taxon>Amygdaloideae</taxon>
        <taxon>Maleae</taxon>
        <taxon>Malus</taxon>
    </lineage>
</organism>
<proteinExistence type="evidence at transcript level"/>
<name>PGLR_MALDO</name>
<comment type="function">
    <text>Acts in concert with the pectinesterase, in the ripening process. Is involved in cell wall metabolism, specifically in polyuronide degradation.</text>
</comment>
<comment type="catalytic activity">
    <reaction>
        <text>(1,4-alpha-D-galacturonosyl)n+m + H2O = (1,4-alpha-D-galacturonosyl)n + (1,4-alpha-D-galacturonosyl)m.</text>
        <dbReference type="EC" id="3.2.1.15"/>
    </reaction>
</comment>
<comment type="subcellular location">
    <subcellularLocation>
        <location>Secreted</location>
    </subcellularLocation>
    <subcellularLocation>
        <location>Secreted</location>
        <location>Cell wall</location>
    </subcellularLocation>
</comment>
<comment type="similarity">
    <text evidence="3">Belongs to the glycosyl hydrolase 28 family.</text>
</comment>
<protein>
    <recommendedName>
        <fullName>Polygalacturonase</fullName>
        <shortName>PG</shortName>
        <ecNumber>3.2.1.15</ecNumber>
    </recommendedName>
    <alternativeName>
        <fullName>Pectinase</fullName>
    </alternativeName>
</protein>
<evidence type="ECO:0000255" key="1"/>
<evidence type="ECO:0000255" key="2">
    <source>
        <dbReference type="PROSITE-ProRule" id="PRU10052"/>
    </source>
</evidence>
<evidence type="ECO:0000305" key="3"/>
<sequence>MALKTQLLWSFVVVFVVSFSTTSCSGSSFQEVNALHSYVDHVDDKESGYNSRAYPSYTDTIEGLKVMELIRPRTQLFSSRKLNTITGGIATSSAPAKTISVDDFGAKGNGADDTQAFVKAWKAACSSSGAMVLVVPQKNYLVRPIEFSGPCKSQLTLQIYGTIEASEDRSIYKDIDHWLIFDNVQNLLVVGPGTINGNGNIWWKNSCKIKPQPPCGTYAPTAVTFNRCNNLVVKNLNIQDAQQIHVIFQNCINVQASCLTVTAPEDSPNTDGIHVTNTQNITISSSVIGTGDDCISIVSGSQRVQATDITCGPGHGISIGSLGEDGSEDHVSGVFVNGAKLSGTSNGLRIKTWKGGSGSATNIVFQNVQMNDVTNPIIIDQNYCDHKTKDCKQQKSAVQVKNVLYQNIRGTSASGDAITLNCSQSVPCQGIVLQSVQLQNGRAECNNVQPAYKGVVSPRC</sequence>
<reference key="1">
    <citation type="journal article" date="1994" name="Plant Physiol.">
        <title>A cDNA clone for endopolygalacturonase from apple.</title>
        <authorList>
            <person name="Atkinson R.G."/>
        </authorList>
    </citation>
    <scope>NUCLEOTIDE SEQUENCE [MRNA]</scope>
    <source>
        <strain>cv. Golden Delicious</strain>
    </source>
</reference>
<keyword id="KW-0134">Cell wall</keyword>
<keyword id="KW-0961">Cell wall biogenesis/degradation</keyword>
<keyword id="KW-0292">Fruit ripening</keyword>
<keyword id="KW-0325">Glycoprotein</keyword>
<keyword id="KW-0326">Glycosidase</keyword>
<keyword id="KW-0378">Hydrolase</keyword>
<keyword id="KW-0964">Secreted</keyword>
<keyword id="KW-0732">Signal</keyword>